<organism>
    <name type="scientific">Leuconostoc mesenteroides subsp. mesenteroides (strain ATCC 8293 / DSM 20343 / BCRC 11652 / CCM 1803 / JCM 6124 / NCDO 523 / NBRC 100496 / NCIMB 8023 / NCTC 12954 / NRRL B-1118 / 37Y)</name>
    <dbReference type="NCBI Taxonomy" id="203120"/>
    <lineage>
        <taxon>Bacteria</taxon>
        <taxon>Bacillati</taxon>
        <taxon>Bacillota</taxon>
        <taxon>Bacilli</taxon>
        <taxon>Lactobacillales</taxon>
        <taxon>Lactobacillaceae</taxon>
        <taxon>Leuconostoc</taxon>
    </lineage>
</organism>
<reference key="1">
    <citation type="journal article" date="2006" name="Proc. Natl. Acad. Sci. U.S.A.">
        <title>Comparative genomics of the lactic acid bacteria.</title>
        <authorList>
            <person name="Makarova K.S."/>
            <person name="Slesarev A."/>
            <person name="Wolf Y.I."/>
            <person name="Sorokin A."/>
            <person name="Mirkin B."/>
            <person name="Koonin E.V."/>
            <person name="Pavlov A."/>
            <person name="Pavlova N."/>
            <person name="Karamychev V."/>
            <person name="Polouchine N."/>
            <person name="Shakhova V."/>
            <person name="Grigoriev I."/>
            <person name="Lou Y."/>
            <person name="Rohksar D."/>
            <person name="Lucas S."/>
            <person name="Huang K."/>
            <person name="Goodstein D.M."/>
            <person name="Hawkins T."/>
            <person name="Plengvidhya V."/>
            <person name="Welker D."/>
            <person name="Hughes J."/>
            <person name="Goh Y."/>
            <person name="Benson A."/>
            <person name="Baldwin K."/>
            <person name="Lee J.-H."/>
            <person name="Diaz-Muniz I."/>
            <person name="Dosti B."/>
            <person name="Smeianov V."/>
            <person name="Wechter W."/>
            <person name="Barabote R."/>
            <person name="Lorca G."/>
            <person name="Altermann E."/>
            <person name="Barrangou R."/>
            <person name="Ganesan B."/>
            <person name="Xie Y."/>
            <person name="Rawsthorne H."/>
            <person name="Tamir D."/>
            <person name="Parker C."/>
            <person name="Breidt F."/>
            <person name="Broadbent J.R."/>
            <person name="Hutkins R."/>
            <person name="O'Sullivan D."/>
            <person name="Steele J."/>
            <person name="Unlu G."/>
            <person name="Saier M.H. Jr."/>
            <person name="Klaenhammer T."/>
            <person name="Richardson P."/>
            <person name="Kozyavkin S."/>
            <person name="Weimer B.C."/>
            <person name="Mills D.A."/>
        </authorList>
    </citation>
    <scope>NUCLEOTIDE SEQUENCE [LARGE SCALE GENOMIC DNA]</scope>
    <source>
        <strain>ATCC 8293 / DSM 20343 / BCRC 11652 / CCM 1803 / JCM 6124 / NCDO 523 / NBRC 100496 / NCIMB 8023 / NCTC 12954 / NRRL B-1118 / 37Y</strain>
    </source>
</reference>
<name>RF1_LEUMM</name>
<protein>
    <recommendedName>
        <fullName evidence="1">Peptide chain release factor 1</fullName>
        <shortName evidence="1">RF-1</shortName>
    </recommendedName>
</protein>
<sequence length="356" mass="40344">MDPIFQSLQTVIDHYDELNEQLADPEVMNNGQHYMKLSKEAGEIRQTVEVYTRYKQVIQDIQDAEELLGDAEMAPLAKEDLSALKPEKEQLEEQLKILMLPKDPNDDKNIIMEIRGAAGGDESSLFAADLLDMYRRYAERQNWSMSIIDESTTEVGGYKEVAVMITGDNVYSKLKFESGAHRVQRVPATETQGRVHTSTATVGVMPEFEEIDFELNESDLEEEFFRSGGAGGQNVNKVSTAVRLIHKPTGIMVKMQEERTQIKNRDKARKLLASRVYDFYAQQNESEYAAQRKSAVGTGDRSERIRTYNYPQNRVTDHRIGLTLNKLDRIMNGELGEVIDALVIADQTAKLAELNK</sequence>
<gene>
    <name evidence="1" type="primary">prfA</name>
    <name type="ordered locus">LEUM_1784</name>
</gene>
<evidence type="ECO:0000255" key="1">
    <source>
        <dbReference type="HAMAP-Rule" id="MF_00093"/>
    </source>
</evidence>
<feature type="chain" id="PRO_1000004909" description="Peptide chain release factor 1">
    <location>
        <begin position="1"/>
        <end position="356"/>
    </location>
</feature>
<feature type="modified residue" description="N5-methylglutamine" evidence="1">
    <location>
        <position position="233"/>
    </location>
</feature>
<comment type="function">
    <text evidence="1">Peptide chain release factor 1 directs the termination of translation in response to the peptide chain termination codons UAG and UAA.</text>
</comment>
<comment type="subcellular location">
    <subcellularLocation>
        <location evidence="1">Cytoplasm</location>
    </subcellularLocation>
</comment>
<comment type="PTM">
    <text evidence="1">Methylated by PrmC. Methylation increases the termination efficiency of RF1.</text>
</comment>
<comment type="similarity">
    <text evidence="1">Belongs to the prokaryotic/mitochondrial release factor family.</text>
</comment>
<dbReference type="EMBL" id="CP000414">
    <property type="protein sequence ID" value="ABJ62871.1"/>
    <property type="molecule type" value="Genomic_DNA"/>
</dbReference>
<dbReference type="RefSeq" id="WP_011680381.1">
    <property type="nucleotide sequence ID" value="NC_008531.1"/>
</dbReference>
<dbReference type="SMR" id="Q03VA1"/>
<dbReference type="EnsemblBacteria" id="ABJ62871">
    <property type="protein sequence ID" value="ABJ62871"/>
    <property type="gene ID" value="LEUM_1784"/>
</dbReference>
<dbReference type="GeneID" id="29576064"/>
<dbReference type="KEGG" id="lme:LEUM_1784"/>
<dbReference type="eggNOG" id="COG0216">
    <property type="taxonomic scope" value="Bacteria"/>
</dbReference>
<dbReference type="HOGENOM" id="CLU_036856_0_1_9"/>
<dbReference type="Proteomes" id="UP000000362">
    <property type="component" value="Chromosome"/>
</dbReference>
<dbReference type="GO" id="GO:0005737">
    <property type="term" value="C:cytoplasm"/>
    <property type="evidence" value="ECO:0007669"/>
    <property type="project" value="UniProtKB-SubCell"/>
</dbReference>
<dbReference type="GO" id="GO:0016149">
    <property type="term" value="F:translation release factor activity, codon specific"/>
    <property type="evidence" value="ECO:0007669"/>
    <property type="project" value="UniProtKB-UniRule"/>
</dbReference>
<dbReference type="FunFam" id="3.30.160.20:FF:000004">
    <property type="entry name" value="Peptide chain release factor 1"/>
    <property type="match status" value="1"/>
</dbReference>
<dbReference type="FunFam" id="3.30.70.1660:FF:000002">
    <property type="entry name" value="Peptide chain release factor 1"/>
    <property type="match status" value="1"/>
</dbReference>
<dbReference type="FunFam" id="3.30.70.1660:FF:000004">
    <property type="entry name" value="Peptide chain release factor 1"/>
    <property type="match status" value="1"/>
</dbReference>
<dbReference type="Gene3D" id="3.30.160.20">
    <property type="match status" value="1"/>
</dbReference>
<dbReference type="Gene3D" id="3.30.70.1660">
    <property type="match status" value="1"/>
</dbReference>
<dbReference type="Gene3D" id="6.10.140.1950">
    <property type="match status" value="1"/>
</dbReference>
<dbReference type="HAMAP" id="MF_00093">
    <property type="entry name" value="Rel_fac_1"/>
    <property type="match status" value="1"/>
</dbReference>
<dbReference type="InterPro" id="IPR005139">
    <property type="entry name" value="PCRF"/>
</dbReference>
<dbReference type="InterPro" id="IPR000352">
    <property type="entry name" value="Pep_chain_release_fac_I"/>
</dbReference>
<dbReference type="InterPro" id="IPR045853">
    <property type="entry name" value="Pep_chain_release_fac_I_sf"/>
</dbReference>
<dbReference type="InterPro" id="IPR050057">
    <property type="entry name" value="Prokaryotic/Mito_RF"/>
</dbReference>
<dbReference type="InterPro" id="IPR004373">
    <property type="entry name" value="RF-1"/>
</dbReference>
<dbReference type="NCBIfam" id="TIGR00019">
    <property type="entry name" value="prfA"/>
    <property type="match status" value="1"/>
</dbReference>
<dbReference type="NCBIfam" id="NF001859">
    <property type="entry name" value="PRK00591.1"/>
    <property type="match status" value="1"/>
</dbReference>
<dbReference type="PANTHER" id="PTHR43804">
    <property type="entry name" value="LD18447P"/>
    <property type="match status" value="1"/>
</dbReference>
<dbReference type="PANTHER" id="PTHR43804:SF7">
    <property type="entry name" value="LD18447P"/>
    <property type="match status" value="1"/>
</dbReference>
<dbReference type="Pfam" id="PF03462">
    <property type="entry name" value="PCRF"/>
    <property type="match status" value="1"/>
</dbReference>
<dbReference type="Pfam" id="PF00472">
    <property type="entry name" value="RF-1"/>
    <property type="match status" value="1"/>
</dbReference>
<dbReference type="SMART" id="SM00937">
    <property type="entry name" value="PCRF"/>
    <property type="match status" value="1"/>
</dbReference>
<dbReference type="SUPFAM" id="SSF75620">
    <property type="entry name" value="Release factor"/>
    <property type="match status" value="1"/>
</dbReference>
<dbReference type="PROSITE" id="PS00745">
    <property type="entry name" value="RF_PROK_I"/>
    <property type="match status" value="1"/>
</dbReference>
<proteinExistence type="inferred from homology"/>
<accession>Q03VA1</accession>
<keyword id="KW-0963">Cytoplasm</keyword>
<keyword id="KW-0488">Methylation</keyword>
<keyword id="KW-0648">Protein biosynthesis</keyword>
<keyword id="KW-1185">Reference proteome</keyword>